<accession>O17271</accession>
<sequence>MKTVIFLALLGLAAAEFIEIGYKVCKSDGTVSQVKADGCELTVKDGKKVCLFKKGSRPIIQIAFKPSKDTDKLKTSVRAKVGGSAMVDFPQTNSDACTYGVKCPVSAGENQIFEQSISITENHPAGEVIQVNWQLTRPDSGKEVCIIFLAEIKE</sequence>
<feature type="signal peptide" evidence="2">
    <location>
        <begin position="1"/>
        <end position="15"/>
    </location>
</feature>
<feature type="chain" id="PRO_0000019868" description="Putative protein heh-1">
    <location>
        <begin position="16"/>
        <end position="154"/>
    </location>
</feature>
<feature type="disulfide bond" evidence="1">
    <location>
        <begin position="39"/>
        <end position="50"/>
    </location>
</feature>
<feature type="disulfide bond" evidence="1">
    <location>
        <begin position="97"/>
        <end position="103"/>
    </location>
</feature>
<keyword id="KW-1015">Disulfide bond</keyword>
<keyword id="KW-1185">Reference proteome</keyword>
<keyword id="KW-0964">Secreted</keyword>
<keyword id="KW-0732">Signal</keyword>
<organism>
    <name type="scientific">Caenorhabditis elegans</name>
    <dbReference type="NCBI Taxonomy" id="6239"/>
    <lineage>
        <taxon>Eukaryota</taxon>
        <taxon>Metazoa</taxon>
        <taxon>Ecdysozoa</taxon>
        <taxon>Nematoda</taxon>
        <taxon>Chromadorea</taxon>
        <taxon>Rhabditida</taxon>
        <taxon>Rhabditina</taxon>
        <taxon>Rhabditomorpha</taxon>
        <taxon>Rhabditoidea</taxon>
        <taxon>Rhabditidae</taxon>
        <taxon>Peloderinae</taxon>
        <taxon>Caenorhabditis</taxon>
    </lineage>
</organism>
<name>HEH1_CAEEL</name>
<reference key="1">
    <citation type="journal article" date="1998" name="Science">
        <title>Genome sequence of the nematode C. elegans: a platform for investigating biology.</title>
        <authorList>
            <consortium name="The C. elegans sequencing consortium"/>
        </authorList>
    </citation>
    <scope>NUCLEOTIDE SEQUENCE [LARGE SCALE GENOMIC DNA]</scope>
    <source>
        <strain>Bristol N2</strain>
    </source>
</reference>
<gene>
    <name type="primary">heh-1</name>
    <name type="ORF">R148.6</name>
</gene>
<comment type="subcellular location">
    <subcellularLocation>
        <location evidence="3">Secreted</location>
    </subcellularLocation>
</comment>
<comment type="similarity">
    <text evidence="3">Belongs to the NPC2 family.</text>
</comment>
<evidence type="ECO:0000250" key="1"/>
<evidence type="ECO:0000255" key="2"/>
<evidence type="ECO:0000305" key="3"/>
<protein>
    <recommendedName>
        <fullName>Putative protein heh-1</fullName>
    </recommendedName>
</protein>
<dbReference type="EMBL" id="FO080850">
    <property type="protein sequence ID" value="CCD67216.1"/>
    <property type="molecule type" value="Genomic_DNA"/>
</dbReference>
<dbReference type="PIR" id="T32408">
    <property type="entry name" value="T32408"/>
</dbReference>
<dbReference type="RefSeq" id="NP_001379800.1">
    <property type="nucleotide sequence ID" value="NM_001393302.1"/>
</dbReference>
<dbReference type="RefSeq" id="NP_497671.2">
    <property type="nucleotide sequence ID" value="NM_065270.6"/>
</dbReference>
<dbReference type="SMR" id="O17271"/>
<dbReference type="BioGRID" id="40669">
    <property type="interactions" value="2"/>
</dbReference>
<dbReference type="IntAct" id="O17271">
    <property type="interactions" value="1"/>
</dbReference>
<dbReference type="STRING" id="6239.R148.6.1"/>
<dbReference type="PaxDb" id="6239-R148.6"/>
<dbReference type="PeptideAtlas" id="O17271"/>
<dbReference type="EnsemblMetazoa" id="R148.6.1">
    <property type="protein sequence ID" value="R148.6.1"/>
    <property type="gene ID" value="WBGene00006452"/>
</dbReference>
<dbReference type="GeneID" id="175426"/>
<dbReference type="UCSC" id="R148.6.1">
    <property type="organism name" value="c. elegans"/>
</dbReference>
<dbReference type="AGR" id="WB:WBGene00006452"/>
<dbReference type="WormBase" id="R148.6">
    <property type="protein sequence ID" value="CE31057"/>
    <property type="gene ID" value="WBGene00006452"/>
    <property type="gene designation" value="heh-1"/>
</dbReference>
<dbReference type="eggNOG" id="KOG4063">
    <property type="taxonomic scope" value="Eukaryota"/>
</dbReference>
<dbReference type="HOGENOM" id="CLU_109192_1_2_1"/>
<dbReference type="InParanoid" id="O17271"/>
<dbReference type="OMA" id="VDIVCVE"/>
<dbReference type="OrthoDB" id="4937502at2759"/>
<dbReference type="PhylomeDB" id="O17271"/>
<dbReference type="Reactome" id="R-CEL-6798695">
    <property type="pathway name" value="Neutrophil degranulation"/>
</dbReference>
<dbReference type="Reactome" id="R-CEL-8964038">
    <property type="pathway name" value="LDL clearance"/>
</dbReference>
<dbReference type="PRO" id="PR:O17271"/>
<dbReference type="Proteomes" id="UP000001940">
    <property type="component" value="Chromosome III"/>
</dbReference>
<dbReference type="Bgee" id="WBGene00006452">
    <property type="expression patterns" value="Expressed in larva and 4 other cell types or tissues"/>
</dbReference>
<dbReference type="GO" id="GO:0005576">
    <property type="term" value="C:extracellular region"/>
    <property type="evidence" value="ECO:0007669"/>
    <property type="project" value="UniProtKB-SubCell"/>
</dbReference>
<dbReference type="GO" id="GO:0032934">
    <property type="term" value="F:sterol binding"/>
    <property type="evidence" value="ECO:0000318"/>
    <property type="project" value="GO_Central"/>
</dbReference>
<dbReference type="GO" id="GO:0032367">
    <property type="term" value="P:intracellular cholesterol transport"/>
    <property type="evidence" value="ECO:0007669"/>
    <property type="project" value="InterPro"/>
</dbReference>
<dbReference type="GO" id="GO:0015918">
    <property type="term" value="P:sterol transport"/>
    <property type="evidence" value="ECO:0000318"/>
    <property type="project" value="GO_Central"/>
</dbReference>
<dbReference type="CDD" id="cd00916">
    <property type="entry name" value="Npc2_like"/>
    <property type="match status" value="1"/>
</dbReference>
<dbReference type="FunFam" id="2.60.40.770:FF:000001">
    <property type="entry name" value="NPC intracellular cholesterol transporter 2"/>
    <property type="match status" value="1"/>
</dbReference>
<dbReference type="Gene3D" id="2.60.40.770">
    <property type="match status" value="1"/>
</dbReference>
<dbReference type="InterPro" id="IPR014756">
    <property type="entry name" value="Ig_E-set"/>
</dbReference>
<dbReference type="InterPro" id="IPR003172">
    <property type="entry name" value="ML_dom"/>
</dbReference>
<dbReference type="InterPro" id="IPR033916">
    <property type="entry name" value="ML_Npc2-like"/>
</dbReference>
<dbReference type="InterPro" id="IPR039670">
    <property type="entry name" value="NPC2-like"/>
</dbReference>
<dbReference type="PANTHER" id="PTHR11306">
    <property type="entry name" value="NIEMANN PICK TYPE C2 PROTEIN NPC2-RELATED"/>
    <property type="match status" value="1"/>
</dbReference>
<dbReference type="PANTHER" id="PTHR11306:SF68">
    <property type="entry name" value="NPC INTRACELLULAR CHOLESTEROL TRANSPORTER 2"/>
    <property type="match status" value="1"/>
</dbReference>
<dbReference type="Pfam" id="PF02221">
    <property type="entry name" value="E1_DerP2_DerF2"/>
    <property type="match status" value="1"/>
</dbReference>
<dbReference type="SMART" id="SM00737">
    <property type="entry name" value="ML"/>
    <property type="match status" value="1"/>
</dbReference>
<dbReference type="SUPFAM" id="SSF81296">
    <property type="entry name" value="E set domains"/>
    <property type="match status" value="1"/>
</dbReference>
<proteinExistence type="inferred from homology"/>